<feature type="chain" id="PRO_0000196020" description="Histone H1-like protein HC2">
    <location>
        <begin position="1"/>
        <end position="207"/>
    </location>
</feature>
<feature type="repeat" description="1">
    <location>
        <begin position="35"/>
        <end position="58"/>
    </location>
</feature>
<feature type="repeat" description="2">
    <location>
        <begin position="71"/>
        <end position="94"/>
    </location>
</feature>
<feature type="repeat" description="3">
    <location>
        <begin position="113"/>
        <end position="136"/>
    </location>
</feature>
<feature type="region of interest" description="Disordered" evidence="1">
    <location>
        <begin position="1"/>
        <end position="72"/>
    </location>
</feature>
<feature type="region of interest" description="3 X 24 AA repeats of V-R-K-V-A-A-K-K-T-V-A-R-K-T-V-A-K-K-A-V-A-A-R-K">
    <location>
        <begin position="35"/>
        <end position="136"/>
    </location>
</feature>
<feature type="compositionally biased region" description="Basic residues" evidence="1">
    <location>
        <begin position="1"/>
        <end position="50"/>
    </location>
</feature>
<feature type="compositionally biased region" description="Basic residues" evidence="1">
    <location>
        <begin position="59"/>
        <end position="72"/>
    </location>
</feature>
<organism>
    <name type="scientific">Chlamydia muridarum (strain MoPn / Nigg)</name>
    <dbReference type="NCBI Taxonomy" id="243161"/>
    <lineage>
        <taxon>Bacteria</taxon>
        <taxon>Pseudomonadati</taxon>
        <taxon>Chlamydiota</taxon>
        <taxon>Chlamydiia</taxon>
        <taxon>Chlamydiales</taxon>
        <taxon>Chlamydiaceae</taxon>
        <taxon>Chlamydia/Chlamydophila group</taxon>
        <taxon>Chlamydia</taxon>
    </lineage>
</organism>
<accession>P38020</accession>
<keyword id="KW-0238">DNA-binding</keyword>
<keyword id="KW-0677">Repeat</keyword>
<gene>
    <name type="primary">hctB</name>
    <name type="synonym">karP</name>
    <name type="ordered locus">TC_0316</name>
</gene>
<reference key="1">
    <citation type="journal article" date="1992" name="Proc. Natl. Acad. Sci. U.S.A.">
        <title>A developmentally regulated chlamydial gene with apparent homology to eukaryotic histone H1.</title>
        <authorList>
            <person name="Perara E."/>
            <person name="Ganem D."/>
            <person name="Engel J.N."/>
        </authorList>
    </citation>
    <scope>NUCLEOTIDE SEQUENCE [GENOMIC DNA]</scope>
    <source>
        <strain>MoPn</strain>
    </source>
</reference>
<reference key="2">
    <citation type="journal article" date="2000" name="Nucleic Acids Res.">
        <title>Genome sequences of Chlamydia trachomatis MoPn and Chlamydia pneumoniae AR39.</title>
        <authorList>
            <person name="Read T.D."/>
            <person name="Brunham R.C."/>
            <person name="Shen C."/>
            <person name="Gill S.R."/>
            <person name="Heidelberg J.F."/>
            <person name="White O."/>
            <person name="Hickey E.K."/>
            <person name="Peterson J.D."/>
            <person name="Utterback T.R."/>
            <person name="Berry K.J."/>
            <person name="Bass S."/>
            <person name="Linher K.D."/>
            <person name="Weidman J.F."/>
            <person name="Khouri H.M."/>
            <person name="Craven B."/>
            <person name="Bowman C."/>
            <person name="Dodson R.J."/>
            <person name="Gwinn M.L."/>
            <person name="Nelson W.C."/>
            <person name="DeBoy R.T."/>
            <person name="Kolonay J.F."/>
            <person name="McClarty G."/>
            <person name="Salzberg S.L."/>
            <person name="Eisen J.A."/>
            <person name="Fraser C.M."/>
        </authorList>
    </citation>
    <scope>NUCLEOTIDE SEQUENCE [LARGE SCALE GENOMIC DNA]</scope>
    <source>
        <strain>MoPn / Nigg</strain>
    </source>
</reference>
<comment type="function">
    <text>Might have a role in establishing the nucleoid structure of elementary bodies.</text>
</comment>
<comment type="developmental stage">
    <text>Expressed late in chlamydial development, during the transition from reticulate bodies to elementary bodies.</text>
</comment>
<comment type="similarity">
    <text evidence="2">Belongs to the histone H1/H5 family. HCT subfamily.</text>
</comment>
<proteinExistence type="evidence at transcript level"/>
<evidence type="ECO:0000256" key="1">
    <source>
        <dbReference type="SAM" id="MobiDB-lite"/>
    </source>
</evidence>
<evidence type="ECO:0000305" key="2"/>
<dbReference type="EMBL" id="M86605">
    <property type="protein sequence ID" value="AAA73195.1"/>
    <property type="molecule type" value="Genomic_DNA"/>
</dbReference>
<dbReference type="EMBL" id="AE002160">
    <property type="protein sequence ID" value="AAF39181.1"/>
    <property type="molecule type" value="Genomic_DNA"/>
</dbReference>
<dbReference type="PIR" id="G81715">
    <property type="entry name" value="G81715"/>
</dbReference>
<dbReference type="RefSeq" id="WP_010232112.1">
    <property type="nucleotide sequence ID" value="NZ_CP063055.1"/>
</dbReference>
<dbReference type="GeneID" id="1246359"/>
<dbReference type="KEGG" id="cmu:TC_0316"/>
<dbReference type="eggNOG" id="ENOG50335M1">
    <property type="taxonomic scope" value="Bacteria"/>
</dbReference>
<dbReference type="HOGENOM" id="CLU_101293_0_0_0"/>
<dbReference type="Proteomes" id="UP000000800">
    <property type="component" value="Chromosome"/>
</dbReference>
<dbReference type="GO" id="GO:0003677">
    <property type="term" value="F:DNA binding"/>
    <property type="evidence" value="ECO:0007669"/>
    <property type="project" value="UniProtKB-KW"/>
</dbReference>
<dbReference type="GO" id="GO:0030527">
    <property type="term" value="F:structural constituent of chromatin"/>
    <property type="evidence" value="ECO:0007669"/>
    <property type="project" value="InterPro"/>
</dbReference>
<dbReference type="GO" id="GO:0030261">
    <property type="term" value="P:chromosome condensation"/>
    <property type="evidence" value="ECO:0007669"/>
    <property type="project" value="InterPro"/>
</dbReference>
<dbReference type="InterPro" id="IPR009970">
    <property type="entry name" value="HC2"/>
</dbReference>
<dbReference type="NCBIfam" id="NF038052">
    <property type="entry name" value="histone_lik_HC2"/>
    <property type="match status" value="1"/>
</dbReference>
<dbReference type="Pfam" id="PF07382">
    <property type="entry name" value="HC2"/>
    <property type="match status" value="1"/>
</dbReference>
<sequence length="207" mass="21982">MLGVQKKRSTRKTAARKTVVRKPAAKKTAAKKASVRKVAAKKTVARKTVAKKAVAARKPAAKKTAAKKAPVRKVAAKKTVARKTVAKKAVAARKTVAKKSVAARKTAAKKAPVRKVAAKKTVARKTVAKKAVAARKPAAKRTVSTKKTAVAAKAGVCMKKHKHTAACGRVAASGVKVCASSAKRRTHHNRSRTAHSWRQQLMKLVAK</sequence>
<name>HCT2_CHLMU</name>
<protein>
    <recommendedName>
        <fullName>Histone H1-like protein HC2</fullName>
    </recommendedName>
    <alternativeName>
        <fullName>HC2 nucleoprotein</fullName>
    </alternativeName>
    <alternativeName>
        <fullName>Histone H1-like protein KARP</fullName>
    </alternativeName>
</protein>